<comment type="function">
    <text evidence="2">DNA-dependent RNA polymerase catalyzes the transcription of DNA into RNA using the four ribonucleoside triphosphates as substrates. Component of RNA polymerase II which synthesizes mRNA precursors and many functional non-coding RNAs. Pol II is the central component of the basal RNA polymerase II transcription machinery. It is composed of mobile elements that move relative to each other. Component of RNA polymerases IV and V which mediate short-interfering RNAs (siRNA) accumulation and subsequent RNA-directed DNA methylation-dependent (RdDM) transcriptional gene silencing (TGS) of endogenous repeated sequences, including transposable elements.</text>
</comment>
<comment type="subunit">
    <text evidence="2">Component of the RNA polymerase II, IV and V complexes. Associates with the mediator complex.</text>
</comment>
<comment type="subcellular location">
    <subcellularLocation>
        <location evidence="1">Nucleus</location>
    </subcellularLocation>
</comment>
<comment type="similarity">
    <text evidence="3">Belongs to the eukaryotic RPB8 RNA polymerase subunit family.</text>
</comment>
<evidence type="ECO:0000250" key="1"/>
<evidence type="ECO:0000269" key="2">
    <source>
    </source>
</evidence>
<evidence type="ECO:0000305" key="3"/>
<evidence type="ECO:0007829" key="4">
    <source>
        <dbReference type="PDB" id="7EU0"/>
    </source>
</evidence>
<evidence type="ECO:0007829" key="5">
    <source>
        <dbReference type="PDB" id="8XMD"/>
    </source>
</evidence>
<protein>
    <recommendedName>
        <fullName>DNA-directed RNA polymerases II, IV and V subunit 8B</fullName>
    </recommendedName>
    <alternativeName>
        <fullName>RNA polymerase Rpb8</fullName>
    </alternativeName>
</protein>
<organism>
    <name type="scientific">Arabidopsis thaliana</name>
    <name type="common">Mouse-ear cress</name>
    <dbReference type="NCBI Taxonomy" id="3702"/>
    <lineage>
        <taxon>Eukaryota</taxon>
        <taxon>Viridiplantae</taxon>
        <taxon>Streptophyta</taxon>
        <taxon>Embryophyta</taxon>
        <taxon>Tracheophyta</taxon>
        <taxon>Spermatophyta</taxon>
        <taxon>Magnoliopsida</taxon>
        <taxon>eudicotyledons</taxon>
        <taxon>Gunneridae</taxon>
        <taxon>Pentapetalae</taxon>
        <taxon>rosids</taxon>
        <taxon>malvids</taxon>
        <taxon>Brassicales</taxon>
        <taxon>Brassicaceae</taxon>
        <taxon>Camelineae</taxon>
        <taxon>Arabidopsis</taxon>
    </lineage>
</organism>
<proteinExistence type="evidence at protein level"/>
<dbReference type="EMBL" id="AL138659">
    <property type="protein sequence ID" value="CAB75457.1"/>
    <property type="molecule type" value="Genomic_DNA"/>
</dbReference>
<dbReference type="EMBL" id="CP002686">
    <property type="protein sequence ID" value="AEE79944.1"/>
    <property type="molecule type" value="Genomic_DNA"/>
</dbReference>
<dbReference type="EMBL" id="AK119016">
    <property type="protein sequence ID" value="BAC43592.1"/>
    <property type="molecule type" value="mRNA"/>
</dbReference>
<dbReference type="EMBL" id="BT008531">
    <property type="protein sequence ID" value="AAP40358.1"/>
    <property type="molecule type" value="mRNA"/>
</dbReference>
<dbReference type="EMBL" id="AY086002">
    <property type="protein sequence ID" value="AAM63211.1"/>
    <property type="molecule type" value="mRNA"/>
</dbReference>
<dbReference type="PIR" id="T49301">
    <property type="entry name" value="T49301"/>
</dbReference>
<dbReference type="RefSeq" id="NP_191519.1">
    <property type="nucleotide sequence ID" value="NM_115822.4"/>
</dbReference>
<dbReference type="PDB" id="7EU0">
    <property type="method" value="EM"/>
    <property type="resolution" value="3.16 A"/>
    <property type="chains" value="H=1-146"/>
</dbReference>
<dbReference type="PDB" id="7EU1">
    <property type="method" value="EM"/>
    <property type="resolution" value="3.86 A"/>
    <property type="chains" value="H=1-146"/>
</dbReference>
<dbReference type="PDB" id="8XMB">
    <property type="method" value="EM"/>
    <property type="resolution" value="3.40 A"/>
    <property type="chains" value="H=1-146"/>
</dbReference>
<dbReference type="PDB" id="8XMC">
    <property type="method" value="EM"/>
    <property type="resolution" value="3.10 A"/>
    <property type="chains" value="H=1-146"/>
</dbReference>
<dbReference type="PDB" id="8XMD">
    <property type="method" value="EM"/>
    <property type="resolution" value="3.40 A"/>
    <property type="chains" value="H=1-146"/>
</dbReference>
<dbReference type="PDB" id="8XME">
    <property type="method" value="EM"/>
    <property type="resolution" value="3.10 A"/>
    <property type="chains" value="H=1-146"/>
</dbReference>
<dbReference type="PDBsum" id="7EU0"/>
<dbReference type="PDBsum" id="7EU1"/>
<dbReference type="PDBsum" id="8XMB"/>
<dbReference type="PDBsum" id="8XMC"/>
<dbReference type="PDBsum" id="8XMD"/>
<dbReference type="PDBsum" id="8XME"/>
<dbReference type="EMDB" id="EMD-31305"/>
<dbReference type="EMDB" id="EMD-31306"/>
<dbReference type="EMDB" id="EMD-38470"/>
<dbReference type="EMDB" id="EMD-38471"/>
<dbReference type="EMDB" id="EMD-38472"/>
<dbReference type="EMDB" id="EMD-38473"/>
<dbReference type="SMR" id="Q9M1A8"/>
<dbReference type="BioGRID" id="10443">
    <property type="interactions" value="25"/>
</dbReference>
<dbReference type="FunCoup" id="Q9M1A8">
    <property type="interactions" value="3989"/>
</dbReference>
<dbReference type="IntAct" id="Q9M1A8">
    <property type="interactions" value="1"/>
</dbReference>
<dbReference type="STRING" id="3702.Q9M1A8"/>
<dbReference type="PaxDb" id="3702-AT3G59600.1"/>
<dbReference type="ProteomicsDB" id="228223"/>
<dbReference type="EnsemblPlants" id="AT3G59600.1">
    <property type="protein sequence ID" value="AT3G59600.1"/>
    <property type="gene ID" value="AT3G59600"/>
</dbReference>
<dbReference type="GeneID" id="825129"/>
<dbReference type="Gramene" id="AT3G59600.1">
    <property type="protein sequence ID" value="AT3G59600.1"/>
    <property type="gene ID" value="AT3G59600"/>
</dbReference>
<dbReference type="KEGG" id="ath:AT3G59600"/>
<dbReference type="Araport" id="AT3G59600"/>
<dbReference type="TAIR" id="AT3G59600">
    <property type="gene designation" value="NRPB8B"/>
</dbReference>
<dbReference type="eggNOG" id="KOG3400">
    <property type="taxonomic scope" value="Eukaryota"/>
</dbReference>
<dbReference type="HOGENOM" id="CLU_103864_1_1_1"/>
<dbReference type="InParanoid" id="Q9M1A8"/>
<dbReference type="OMA" id="KEDDKGW"/>
<dbReference type="OrthoDB" id="20018at2759"/>
<dbReference type="PhylomeDB" id="Q9M1A8"/>
<dbReference type="PRO" id="PR:Q9M1A8"/>
<dbReference type="Proteomes" id="UP000006548">
    <property type="component" value="Chromosome 3"/>
</dbReference>
<dbReference type="ExpressionAtlas" id="Q9M1A8">
    <property type="expression patterns" value="baseline and differential"/>
</dbReference>
<dbReference type="GO" id="GO:0005665">
    <property type="term" value="C:RNA polymerase II, core complex"/>
    <property type="evidence" value="ECO:0000314"/>
    <property type="project" value="UniProtKB"/>
</dbReference>
<dbReference type="GO" id="GO:0000418">
    <property type="term" value="C:RNA polymerase IV complex"/>
    <property type="evidence" value="ECO:0000314"/>
    <property type="project" value="UniProtKB"/>
</dbReference>
<dbReference type="GO" id="GO:0000419">
    <property type="term" value="C:RNA polymerase V complex"/>
    <property type="evidence" value="ECO:0000314"/>
    <property type="project" value="UniProtKB"/>
</dbReference>
<dbReference type="GO" id="GO:0003899">
    <property type="term" value="F:DNA-directed RNA polymerase activity"/>
    <property type="evidence" value="ECO:0007669"/>
    <property type="project" value="InterPro"/>
</dbReference>
<dbReference type="GO" id="GO:0006351">
    <property type="term" value="P:DNA-templated transcription"/>
    <property type="evidence" value="ECO:0007669"/>
    <property type="project" value="InterPro"/>
</dbReference>
<dbReference type="FunFam" id="2.40.50.140:FF:000073">
    <property type="entry name" value="DNA-directed RNA polymerases I, II, and III subunit RPABC3"/>
    <property type="match status" value="1"/>
</dbReference>
<dbReference type="Gene3D" id="2.40.50.140">
    <property type="entry name" value="Nucleic acid-binding proteins"/>
    <property type="match status" value="1"/>
</dbReference>
<dbReference type="InterPro" id="IPR012340">
    <property type="entry name" value="NA-bd_OB-fold"/>
</dbReference>
<dbReference type="InterPro" id="IPR005570">
    <property type="entry name" value="RPABC3"/>
</dbReference>
<dbReference type="PANTHER" id="PTHR10917">
    <property type="entry name" value="DNA-DIRECTED RNA POLYMERASES I, II, AND III SUBUNIT RPABC3"/>
    <property type="match status" value="1"/>
</dbReference>
<dbReference type="PANTHER" id="PTHR10917:SF0">
    <property type="entry name" value="DNA-DIRECTED RNA POLYMERASES I, II, AND III SUBUNIT RPABC3"/>
    <property type="match status" value="1"/>
</dbReference>
<dbReference type="Pfam" id="PF03870">
    <property type="entry name" value="RNA_pol_Rpb8"/>
    <property type="match status" value="1"/>
</dbReference>
<dbReference type="PIRSF" id="PIRSF000779">
    <property type="entry name" value="RNA_pol_Rpb8"/>
    <property type="match status" value="1"/>
</dbReference>
<dbReference type="SMART" id="SM00658">
    <property type="entry name" value="RPOL8c"/>
    <property type="match status" value="1"/>
</dbReference>
<dbReference type="SUPFAM" id="SSF50249">
    <property type="entry name" value="Nucleic acid-binding proteins"/>
    <property type="match status" value="1"/>
</dbReference>
<keyword id="KW-0002">3D-structure</keyword>
<keyword id="KW-0539">Nucleus</keyword>
<keyword id="KW-1185">Reference proteome</keyword>
<reference key="1">
    <citation type="journal article" date="2000" name="Nature">
        <title>Sequence and analysis of chromosome 3 of the plant Arabidopsis thaliana.</title>
        <authorList>
            <person name="Salanoubat M."/>
            <person name="Lemcke K."/>
            <person name="Rieger M."/>
            <person name="Ansorge W."/>
            <person name="Unseld M."/>
            <person name="Fartmann B."/>
            <person name="Valle G."/>
            <person name="Bloecker H."/>
            <person name="Perez-Alonso M."/>
            <person name="Obermaier B."/>
            <person name="Delseny M."/>
            <person name="Boutry M."/>
            <person name="Grivell L.A."/>
            <person name="Mache R."/>
            <person name="Puigdomenech P."/>
            <person name="De Simone V."/>
            <person name="Choisne N."/>
            <person name="Artiguenave F."/>
            <person name="Robert C."/>
            <person name="Brottier P."/>
            <person name="Wincker P."/>
            <person name="Cattolico L."/>
            <person name="Weissenbach J."/>
            <person name="Saurin W."/>
            <person name="Quetier F."/>
            <person name="Schaefer M."/>
            <person name="Mueller-Auer S."/>
            <person name="Gabel C."/>
            <person name="Fuchs M."/>
            <person name="Benes V."/>
            <person name="Wurmbach E."/>
            <person name="Drzonek H."/>
            <person name="Erfle H."/>
            <person name="Jordan N."/>
            <person name="Bangert S."/>
            <person name="Wiedelmann R."/>
            <person name="Kranz H."/>
            <person name="Voss H."/>
            <person name="Holland R."/>
            <person name="Brandt P."/>
            <person name="Nyakatura G."/>
            <person name="Vezzi A."/>
            <person name="D'Angelo M."/>
            <person name="Pallavicini A."/>
            <person name="Toppo S."/>
            <person name="Simionati B."/>
            <person name="Conrad A."/>
            <person name="Hornischer K."/>
            <person name="Kauer G."/>
            <person name="Loehnert T.-H."/>
            <person name="Nordsiek G."/>
            <person name="Reichelt J."/>
            <person name="Scharfe M."/>
            <person name="Schoen O."/>
            <person name="Bargues M."/>
            <person name="Terol J."/>
            <person name="Climent J."/>
            <person name="Navarro P."/>
            <person name="Collado C."/>
            <person name="Perez-Perez A."/>
            <person name="Ottenwaelder B."/>
            <person name="Duchemin D."/>
            <person name="Cooke R."/>
            <person name="Laudie M."/>
            <person name="Berger-Llauro C."/>
            <person name="Purnelle B."/>
            <person name="Masuy D."/>
            <person name="de Haan M."/>
            <person name="Maarse A.C."/>
            <person name="Alcaraz J.-P."/>
            <person name="Cottet A."/>
            <person name="Casacuberta E."/>
            <person name="Monfort A."/>
            <person name="Argiriou A."/>
            <person name="Flores M."/>
            <person name="Liguori R."/>
            <person name="Vitale D."/>
            <person name="Mannhaupt G."/>
            <person name="Haase D."/>
            <person name="Schoof H."/>
            <person name="Rudd S."/>
            <person name="Zaccaria P."/>
            <person name="Mewes H.-W."/>
            <person name="Mayer K.F.X."/>
            <person name="Kaul S."/>
            <person name="Town C.D."/>
            <person name="Koo H.L."/>
            <person name="Tallon L.J."/>
            <person name="Jenkins J."/>
            <person name="Rooney T."/>
            <person name="Rizzo M."/>
            <person name="Walts A."/>
            <person name="Utterback T."/>
            <person name="Fujii C.Y."/>
            <person name="Shea T.P."/>
            <person name="Creasy T.H."/>
            <person name="Haas B."/>
            <person name="Maiti R."/>
            <person name="Wu D."/>
            <person name="Peterson J."/>
            <person name="Van Aken S."/>
            <person name="Pai G."/>
            <person name="Militscher J."/>
            <person name="Sellers P."/>
            <person name="Gill J.E."/>
            <person name="Feldblyum T.V."/>
            <person name="Preuss D."/>
            <person name="Lin X."/>
            <person name="Nierman W.C."/>
            <person name="Salzberg S.L."/>
            <person name="White O."/>
            <person name="Venter J.C."/>
            <person name="Fraser C.M."/>
            <person name="Kaneko T."/>
            <person name="Nakamura Y."/>
            <person name="Sato S."/>
            <person name="Kato T."/>
            <person name="Asamizu E."/>
            <person name="Sasamoto S."/>
            <person name="Kimura T."/>
            <person name="Idesawa K."/>
            <person name="Kawashima K."/>
            <person name="Kishida Y."/>
            <person name="Kiyokawa C."/>
            <person name="Kohara M."/>
            <person name="Matsumoto M."/>
            <person name="Matsuno A."/>
            <person name="Muraki A."/>
            <person name="Nakayama S."/>
            <person name="Nakazaki N."/>
            <person name="Shinpo S."/>
            <person name="Takeuchi C."/>
            <person name="Wada T."/>
            <person name="Watanabe A."/>
            <person name="Yamada M."/>
            <person name="Yasuda M."/>
            <person name="Tabata S."/>
        </authorList>
    </citation>
    <scope>NUCLEOTIDE SEQUENCE [LARGE SCALE GENOMIC DNA]</scope>
    <source>
        <strain>cv. Columbia</strain>
    </source>
</reference>
<reference key="2">
    <citation type="journal article" date="2017" name="Plant J.">
        <title>Araport11: a complete reannotation of the Arabidopsis thaliana reference genome.</title>
        <authorList>
            <person name="Cheng C.Y."/>
            <person name="Krishnakumar V."/>
            <person name="Chan A.P."/>
            <person name="Thibaud-Nissen F."/>
            <person name="Schobel S."/>
            <person name="Town C.D."/>
        </authorList>
    </citation>
    <scope>GENOME REANNOTATION</scope>
    <source>
        <strain>cv. Columbia</strain>
    </source>
</reference>
<reference key="3">
    <citation type="journal article" date="2002" name="Science">
        <title>Functional annotation of a full-length Arabidopsis cDNA collection.</title>
        <authorList>
            <person name="Seki M."/>
            <person name="Narusaka M."/>
            <person name="Kamiya A."/>
            <person name="Ishida J."/>
            <person name="Satou M."/>
            <person name="Sakurai T."/>
            <person name="Nakajima M."/>
            <person name="Enju A."/>
            <person name="Akiyama K."/>
            <person name="Oono Y."/>
            <person name="Muramatsu M."/>
            <person name="Hayashizaki Y."/>
            <person name="Kawai J."/>
            <person name="Carninci P."/>
            <person name="Itoh M."/>
            <person name="Ishii Y."/>
            <person name="Arakawa T."/>
            <person name="Shibata K."/>
            <person name="Shinagawa A."/>
            <person name="Shinozaki K."/>
        </authorList>
    </citation>
    <scope>NUCLEOTIDE SEQUENCE [LARGE SCALE MRNA]</scope>
    <source>
        <strain>cv. Columbia</strain>
    </source>
</reference>
<reference key="4">
    <citation type="journal article" date="2003" name="Science">
        <title>Empirical analysis of transcriptional activity in the Arabidopsis genome.</title>
        <authorList>
            <person name="Yamada K."/>
            <person name="Lim J."/>
            <person name="Dale J.M."/>
            <person name="Chen H."/>
            <person name="Shinn P."/>
            <person name="Palm C.J."/>
            <person name="Southwick A.M."/>
            <person name="Wu H.C."/>
            <person name="Kim C.J."/>
            <person name="Nguyen M."/>
            <person name="Pham P.K."/>
            <person name="Cheuk R.F."/>
            <person name="Karlin-Newmann G."/>
            <person name="Liu S.X."/>
            <person name="Lam B."/>
            <person name="Sakano H."/>
            <person name="Wu T."/>
            <person name="Yu G."/>
            <person name="Miranda M."/>
            <person name="Quach H.L."/>
            <person name="Tripp M."/>
            <person name="Chang C.H."/>
            <person name="Lee J.M."/>
            <person name="Toriumi M.J."/>
            <person name="Chan M.M."/>
            <person name="Tang C.C."/>
            <person name="Onodera C.S."/>
            <person name="Deng J.M."/>
            <person name="Akiyama K."/>
            <person name="Ansari Y."/>
            <person name="Arakawa T."/>
            <person name="Banh J."/>
            <person name="Banno F."/>
            <person name="Bowser L."/>
            <person name="Brooks S.Y."/>
            <person name="Carninci P."/>
            <person name="Chao Q."/>
            <person name="Choy N."/>
            <person name="Enju A."/>
            <person name="Goldsmith A.D."/>
            <person name="Gurjal M."/>
            <person name="Hansen N.F."/>
            <person name="Hayashizaki Y."/>
            <person name="Johnson-Hopson C."/>
            <person name="Hsuan V.W."/>
            <person name="Iida K."/>
            <person name="Karnes M."/>
            <person name="Khan S."/>
            <person name="Koesema E."/>
            <person name="Ishida J."/>
            <person name="Jiang P.X."/>
            <person name="Jones T."/>
            <person name="Kawai J."/>
            <person name="Kamiya A."/>
            <person name="Meyers C."/>
            <person name="Nakajima M."/>
            <person name="Narusaka M."/>
            <person name="Seki M."/>
            <person name="Sakurai T."/>
            <person name="Satou M."/>
            <person name="Tamse R."/>
            <person name="Vaysberg M."/>
            <person name="Wallender E.K."/>
            <person name="Wong C."/>
            <person name="Yamamura Y."/>
            <person name="Yuan S."/>
            <person name="Shinozaki K."/>
            <person name="Davis R.W."/>
            <person name="Theologis A."/>
            <person name="Ecker J.R."/>
        </authorList>
    </citation>
    <scope>NUCLEOTIDE SEQUENCE [LARGE SCALE MRNA]</scope>
    <source>
        <strain>cv. Columbia</strain>
    </source>
</reference>
<reference key="5">
    <citation type="submission" date="2002-03" db="EMBL/GenBank/DDBJ databases">
        <title>Full-length cDNA from Arabidopsis thaliana.</title>
        <authorList>
            <person name="Brover V.V."/>
            <person name="Troukhan M.E."/>
            <person name="Alexandrov N.A."/>
            <person name="Lu Y.-P."/>
            <person name="Flavell R.B."/>
            <person name="Feldmann K.A."/>
        </authorList>
    </citation>
    <scope>NUCLEOTIDE SEQUENCE [LARGE SCALE MRNA]</scope>
</reference>
<reference key="6">
    <citation type="journal article" date="2007" name="Mol. Cell">
        <title>Purification of a plant mediator from Arabidopsis thaliana identifies PFT1 as the Med25 subunit.</title>
        <authorList>
            <person name="Baeckstroem S."/>
            <person name="Elfving N."/>
            <person name="Nilsson R."/>
            <person name="Wingsle G."/>
            <person name="Bjoerklund S."/>
        </authorList>
    </citation>
    <scope>IDENTIFICATION BY MASS SPECTROMETRY</scope>
    <scope>INTERACTION WITH THE MEDIATOR COMPLEX</scope>
</reference>
<reference key="7">
    <citation type="journal article" date="2009" name="Mol. Cell">
        <title>Subunit compositions of the RNA-silencing enzymes Pol IV and Pol V reveal their origins as specialized forms of RNA polymerase II.</title>
        <authorList>
            <person name="Ream T.S."/>
            <person name="Haag J.R."/>
            <person name="Wierzbicki A.T."/>
            <person name="Nicora C.D."/>
            <person name="Norbeck A.D."/>
            <person name="Zhu J.K."/>
            <person name="Hagen G."/>
            <person name="Guilfoyle T.J."/>
            <person name="Pasa-Tolic L."/>
            <person name="Pikaard C.S."/>
        </authorList>
    </citation>
    <scope>FUNCTION</scope>
    <scope>IDENTIFICATION BY MASS SPECTROMETRY</scope>
    <scope>SUBUNIT</scope>
    <scope>NOMENCLATURE</scope>
</reference>
<accession>Q9M1A8</accession>
<gene>
    <name type="primary">NRPB8B</name>
    <name type="synonym">NRPD8B</name>
    <name type="synonym">NRPE8B</name>
    <name type="ordered locus">At3g59600</name>
    <name type="ORF">T16L24.150</name>
</gene>
<sequence length="146" mass="16603">MASNIIMFEDIFVVDKLDPDGKKFDKVTRVEARSHNLEMFMHLDVNTEVYPLAVGDKFTLAMAPTLNLDGTPDTGYFTPGAKKTLADKYEYIMHGKLYKISERDGKTPKAELYVSFGGLLMLLQGDPAHISHFELDQRLFLLMRKL</sequence>
<feature type="chain" id="PRO_0000423325" description="DNA-directed RNA polymerases II, IV and V subunit 8B">
    <location>
        <begin position="1"/>
        <end position="146"/>
    </location>
</feature>
<feature type="strand" evidence="4">
    <location>
        <begin position="9"/>
        <end position="19"/>
    </location>
</feature>
<feature type="strand" evidence="4">
    <location>
        <begin position="28"/>
        <end position="34"/>
    </location>
</feature>
<feature type="turn" evidence="4">
    <location>
        <begin position="35"/>
        <end position="37"/>
    </location>
</feature>
<feature type="strand" evidence="4">
    <location>
        <begin position="40"/>
        <end position="45"/>
    </location>
</feature>
<feature type="turn" evidence="4">
    <location>
        <begin position="47"/>
        <end position="49"/>
    </location>
</feature>
<feature type="strand" evidence="4">
    <location>
        <begin position="57"/>
        <end position="61"/>
    </location>
</feature>
<feature type="strand" evidence="4">
    <location>
        <begin position="66"/>
        <end position="70"/>
    </location>
</feature>
<feature type="turn" evidence="5">
    <location>
        <begin position="86"/>
        <end position="88"/>
    </location>
</feature>
<feature type="strand" evidence="4">
    <location>
        <begin position="93"/>
        <end position="99"/>
    </location>
</feature>
<feature type="strand" evidence="4">
    <location>
        <begin position="113"/>
        <end position="118"/>
    </location>
</feature>
<feature type="strand" evidence="4">
    <location>
        <begin position="120"/>
        <end position="124"/>
    </location>
</feature>
<feature type="turn" evidence="4">
    <location>
        <begin position="127"/>
        <end position="129"/>
    </location>
</feature>
<feature type="strand" evidence="4">
    <location>
        <begin position="135"/>
        <end position="144"/>
    </location>
</feature>
<name>RPB8B_ARATH</name>